<feature type="initiator methionine" description="Removed" evidence="1">
    <location>
        <position position="1"/>
    </location>
</feature>
<feature type="chain" id="PRO_0000143139" description="Eukaryotic peptide chain release factor subunit 1">
    <location>
        <begin position="2"/>
        <end position="437"/>
    </location>
</feature>
<feature type="short sequence motif" description="NIKS motif; plays an important role in translational termination" evidence="1">
    <location>
        <begin position="61"/>
        <end position="64"/>
    </location>
</feature>
<feature type="modified residue" description="N-acetylalanine" evidence="1">
    <location>
        <position position="2"/>
    </location>
</feature>
<feature type="modified residue" description="4-hydroxylysine" evidence="1">
    <location>
        <position position="63"/>
    </location>
</feature>
<feature type="modified residue" description="N5-methylglutamine" evidence="1">
    <location>
        <position position="185"/>
    </location>
</feature>
<feature type="modified residue" description="Phosphothreonine" evidence="1">
    <location>
        <position position="347"/>
    </location>
</feature>
<feature type="cross-link" description="Glycyl lysine isopeptide (Lys-Gly) (interchain with G-Cter in SUMO2)" evidence="1">
    <location>
        <position position="87"/>
    </location>
</feature>
<feature type="cross-link" description="Glycyl lysine isopeptide (Lys-Gly) (interchain with G-Cter in ubiquitin)" evidence="1">
    <location>
        <position position="279"/>
    </location>
</feature>
<feature type="cross-link" description="Glycyl lysine isopeptide (Lys-Gly) (interchain with G-Cter in SUMO2)" evidence="1">
    <location>
        <position position="404"/>
    </location>
</feature>
<reference key="1">
    <citation type="journal article" date="1997" name="Biochimie">
        <title>Expression of the release factor eRF1 (Sup45p) gene of higher eukaryotes in yeast and mammalian tissues.</title>
        <authorList>
            <person name="Urbero B."/>
            <person name="Eurwilaichitr L."/>
            <person name="Stansfield I."/>
            <person name="Tassan J.P."/>
            <person name="le Goff X."/>
            <person name="Kress M."/>
            <person name="Tuite M.F."/>
        </authorList>
    </citation>
    <scope>NUCLEOTIDE SEQUENCE [MRNA]</scope>
    <source>
        <tissue>Kidney</tissue>
    </source>
</reference>
<gene>
    <name type="primary">ETF1</name>
    <name type="synonym">ERF1</name>
    <name type="synonym">RF1</name>
</gene>
<organism>
    <name type="scientific">Mesocricetus auratus</name>
    <name type="common">Golden hamster</name>
    <dbReference type="NCBI Taxonomy" id="10036"/>
    <lineage>
        <taxon>Eukaryota</taxon>
        <taxon>Metazoa</taxon>
        <taxon>Chordata</taxon>
        <taxon>Craniata</taxon>
        <taxon>Vertebrata</taxon>
        <taxon>Euteleostomi</taxon>
        <taxon>Mammalia</taxon>
        <taxon>Eutheria</taxon>
        <taxon>Euarchontoglires</taxon>
        <taxon>Glires</taxon>
        <taxon>Rodentia</taxon>
        <taxon>Myomorpha</taxon>
        <taxon>Muroidea</taxon>
        <taxon>Cricetidae</taxon>
        <taxon>Cricetinae</taxon>
        <taxon>Mesocricetus</taxon>
    </lineage>
</organism>
<sequence>MADDPSAADRNVEIWKIKKLIKSLEAARGNGTSMISLIIPPKDQISRVAKMLADEFGTASNIKSRVNRLSVLGAITSVQQRLKLYNKVPPNGLVVYCGTIVTEEGKEKKVNIDFEPFKPINTSLYLCDNKFHTEALTALLSDDSKFGFIVIDGSGALFGTLQGNTREVLHKFTVDLPKKHGRGGQSALRFARLRMEKRHNYVRKVAETAVQLFISGDKVNVAGLVLAGSADFKTELSQSDMFDQRLQSKVLKLVDISYGGENGFNQAIELSTEVLSNVKFIQEKKLIGRYFDEISQDTGKYCFGVEDTLKALEMGAVEILIVYENLDIMRYVLHCQGTEEEKILYLTPEQEKDKSHFTDKETGQEHELIESMPLLEWFANNYKKFGATLEIVTDKSQEGSQFVKGFGGIGGILRYRVDFQGMEYQGGDDEFFDLDDY</sequence>
<dbReference type="EMBL" id="X81626">
    <property type="protein sequence ID" value="CAA57282.1"/>
    <property type="molecule type" value="mRNA"/>
</dbReference>
<dbReference type="RefSeq" id="NP_001268599.1">
    <property type="nucleotide sequence ID" value="NM_001281670.1"/>
</dbReference>
<dbReference type="BMRB" id="P62496"/>
<dbReference type="SMR" id="P62496"/>
<dbReference type="STRING" id="10036.ENSMAUP00000013907"/>
<dbReference type="Ensembl" id="ENSMAUT00000017822">
    <property type="protein sequence ID" value="ENSMAUP00000013907"/>
    <property type="gene ID" value="ENSMAUG00000013832"/>
</dbReference>
<dbReference type="GeneID" id="101838018"/>
<dbReference type="KEGG" id="maua:101838018"/>
<dbReference type="CTD" id="2107"/>
<dbReference type="eggNOG" id="KOG0688">
    <property type="taxonomic scope" value="Eukaryota"/>
</dbReference>
<dbReference type="OrthoDB" id="10254527at2759"/>
<dbReference type="Proteomes" id="UP000189706">
    <property type="component" value="Unplaced"/>
</dbReference>
<dbReference type="GO" id="GO:0005737">
    <property type="term" value="C:cytoplasm"/>
    <property type="evidence" value="ECO:0000250"/>
    <property type="project" value="UniProtKB"/>
</dbReference>
<dbReference type="GO" id="GO:0022626">
    <property type="term" value="C:cytosolic ribosome"/>
    <property type="evidence" value="ECO:0007669"/>
    <property type="project" value="Ensembl"/>
</dbReference>
<dbReference type="GO" id="GO:0018444">
    <property type="term" value="C:translation release factor complex"/>
    <property type="evidence" value="ECO:0007669"/>
    <property type="project" value="Ensembl"/>
</dbReference>
<dbReference type="GO" id="GO:0004045">
    <property type="term" value="F:peptidyl-tRNA hydrolase activity"/>
    <property type="evidence" value="ECO:0007669"/>
    <property type="project" value="Ensembl"/>
</dbReference>
<dbReference type="GO" id="GO:1990825">
    <property type="term" value="F:sequence-specific mRNA binding"/>
    <property type="evidence" value="ECO:0007669"/>
    <property type="project" value="Ensembl"/>
</dbReference>
<dbReference type="GO" id="GO:0003747">
    <property type="term" value="F:translation release factor activity"/>
    <property type="evidence" value="ECO:0007669"/>
    <property type="project" value="Ensembl"/>
</dbReference>
<dbReference type="GO" id="GO:0008079">
    <property type="term" value="F:translation termination factor activity"/>
    <property type="evidence" value="ECO:0000250"/>
    <property type="project" value="UniProtKB"/>
</dbReference>
<dbReference type="GO" id="GO:0000184">
    <property type="term" value="P:nuclear-transcribed mRNA catabolic process, nonsense-mediated decay"/>
    <property type="evidence" value="ECO:0007669"/>
    <property type="project" value="UniProtKB-KW"/>
</dbReference>
<dbReference type="GO" id="GO:0006449">
    <property type="term" value="P:regulation of translational termination"/>
    <property type="evidence" value="ECO:0000250"/>
    <property type="project" value="UniProtKB"/>
</dbReference>
<dbReference type="FunFam" id="3.30.1330.30:FF:000009">
    <property type="entry name" value="Eukaryotic peptide chain release factor subunit 1"/>
    <property type="match status" value="1"/>
</dbReference>
<dbReference type="FunFam" id="3.30.420.60:FF:000001">
    <property type="entry name" value="Eukaryotic peptide chain release factor subunit 1"/>
    <property type="match status" value="1"/>
</dbReference>
<dbReference type="FunFam" id="3.30.960.10:FF:000001">
    <property type="entry name" value="Eukaryotic peptide chain release factor subunit 1"/>
    <property type="match status" value="1"/>
</dbReference>
<dbReference type="Gene3D" id="3.30.1330.30">
    <property type="match status" value="1"/>
</dbReference>
<dbReference type="Gene3D" id="3.30.960.10">
    <property type="entry name" value="eRF1 domain 1"/>
    <property type="match status" value="1"/>
</dbReference>
<dbReference type="Gene3D" id="3.30.420.60">
    <property type="entry name" value="eRF1 domain 2"/>
    <property type="match status" value="1"/>
</dbReference>
<dbReference type="InterPro" id="IPR042226">
    <property type="entry name" value="eFR1_2_sf"/>
</dbReference>
<dbReference type="InterPro" id="IPR005140">
    <property type="entry name" value="eRF1_1_Pelota"/>
</dbReference>
<dbReference type="InterPro" id="IPR024049">
    <property type="entry name" value="eRF1_1_sf"/>
</dbReference>
<dbReference type="InterPro" id="IPR005141">
    <property type="entry name" value="eRF1_2"/>
</dbReference>
<dbReference type="InterPro" id="IPR005142">
    <property type="entry name" value="eRF1_3"/>
</dbReference>
<dbReference type="InterPro" id="IPR004403">
    <property type="entry name" value="Peptide_chain-rel_eRF1/aRF1"/>
</dbReference>
<dbReference type="InterPro" id="IPR029064">
    <property type="entry name" value="Ribosomal_eL30-like_sf"/>
</dbReference>
<dbReference type="NCBIfam" id="TIGR03676">
    <property type="entry name" value="aRF1_eRF1"/>
    <property type="match status" value="1"/>
</dbReference>
<dbReference type="PANTHER" id="PTHR10113">
    <property type="entry name" value="PEPTIDE CHAIN RELEASE FACTOR SUBUNIT 1"/>
    <property type="match status" value="1"/>
</dbReference>
<dbReference type="Pfam" id="PF03463">
    <property type="entry name" value="eRF1_1"/>
    <property type="match status" value="1"/>
</dbReference>
<dbReference type="Pfam" id="PF03464">
    <property type="entry name" value="eRF1_2"/>
    <property type="match status" value="1"/>
</dbReference>
<dbReference type="Pfam" id="PF03465">
    <property type="entry name" value="eRF1_3"/>
    <property type="match status" value="1"/>
</dbReference>
<dbReference type="SMART" id="SM01194">
    <property type="entry name" value="eRF1_1"/>
    <property type="match status" value="1"/>
</dbReference>
<dbReference type="SUPFAM" id="SSF55315">
    <property type="entry name" value="L30e-like"/>
    <property type="match status" value="1"/>
</dbReference>
<dbReference type="SUPFAM" id="SSF55481">
    <property type="entry name" value="N-terminal domain of eukaryotic peptide chain release factor subunit 1, ERF1"/>
    <property type="match status" value="1"/>
</dbReference>
<dbReference type="SUPFAM" id="SSF53137">
    <property type="entry name" value="Translational machinery components"/>
    <property type="match status" value="1"/>
</dbReference>
<comment type="function">
    <text evidence="1">Component of the eRF1-eRF3-GTP ternary complex, a ternary complex that mediates translation termination in response to the termination codons. The eRF1-eRF3-GTP complex binds to a stop codon in the ribosomal A-site. ETF1/ERF1 is responsible for stop codon recognition and inducing hydrolysis of peptidyl-tRNA. Following GTP hydrolysis, eRF3 (GSPT1/ERF3A or GSPT2/ERF3B) dissociates, permitting ETF1/eRF1 to accommodate fully in the A-site, followed by hydrolysis of peptidyl-tRNA. Component of the transient SURF complex which recruits UPF1 to stalled ribosomes in the context of nonsense-mediated decay (NMD) of mRNAs containing premature stop codons. Required for SHFL-mediated translation termination which inhibits programmed ribosomal frameshifting (-1PRF) of mRNA from viruses and cellular genes.</text>
</comment>
<comment type="subunit">
    <text evidence="1">Component of the eRF1-eRF3-GTP ternary complex, composed of ETF1/ERF1 and eRF3 (GSPT1/ERF3A or GSPT2/ERF3B) and GTP. Component of the transient SURF (SMG1-UPF1-eRF1-eRF3) complex. Interacts with JMJD4. The ETF1-GSPT1 complex interacts with JMJD4.</text>
</comment>
<comment type="subcellular location">
    <subcellularLocation>
        <location evidence="1">Cytoplasm</location>
    </subcellularLocation>
</comment>
<comment type="PTM">
    <text evidence="1">Hydroxylation at Lys-63 by JMJD4 promotes its translational termination efficiency.</text>
</comment>
<comment type="PTM">
    <text evidence="1">Methylated at Gln-185 by N6AMT1.</text>
</comment>
<comment type="PTM">
    <text evidence="1">Ubiquitinated at Lys-279 via 'Lys-6'-linked polyubiquitin chains by RNF14 and RNF25 in response to ribosome collisions (ribosome stalling), leading to its degradation by the proteasome and rescue of stalled ribosomes.</text>
</comment>
<comment type="similarity">
    <text evidence="2">Belongs to the eukaryotic release factor 1 family.</text>
</comment>
<protein>
    <recommendedName>
        <fullName>Eukaryotic peptide chain release factor subunit 1</fullName>
        <shortName>Eukaryotic release factor 1</shortName>
        <shortName>Protein Cl1</shortName>
        <shortName>eRF1</shortName>
    </recommendedName>
</protein>
<keyword id="KW-0007">Acetylation</keyword>
<keyword id="KW-0963">Cytoplasm</keyword>
<keyword id="KW-0379">Hydroxylation</keyword>
<keyword id="KW-1017">Isopeptide bond</keyword>
<keyword id="KW-0488">Methylation</keyword>
<keyword id="KW-0866">Nonsense-mediated mRNA decay</keyword>
<keyword id="KW-0597">Phosphoprotein</keyword>
<keyword id="KW-0648">Protein biosynthesis</keyword>
<keyword id="KW-1185">Reference proteome</keyword>
<keyword id="KW-0832">Ubl conjugation</keyword>
<accession>P62496</accession>
<accession>P46055</accession>
<evidence type="ECO:0000250" key="1">
    <source>
        <dbReference type="UniProtKB" id="P62495"/>
    </source>
</evidence>
<evidence type="ECO:0000305" key="2"/>
<name>ERF1_MESAU</name>
<proteinExistence type="evidence at transcript level"/>